<name>FTSA_BUCAP</name>
<sequence length="418" mass="46675">MIISKNRKLVVGLEIGTTKVVTLVGEVLTNGKIKIIGIGICQSNGIDKGRINNLDAVISCIRESIHQAEIMANCQITSVYLSLSSKYINCQNEIGIVPISEDEVTKEDIENVIHTAKSVKILNEHHILHVIPQEYSIDQQSGIKNPIGLSGTRMQVRVHLITCHQNMAKNIIKAVEKCDIKVDQVIFSGLASSKAVLTEDECKLGVCMIDIGGGTIDLITYIDGSIQDSQVIPYAGNIVTKDISYAFSTSYSDSEKIKIKYGSAIKLSPGTSKNIDLSSKYGNFQKNLQQDTVIEVIESRYNELLHLINNRILYVQKKLYKEGRKYQLTGGIVLTGGASTISFLTECAEKIFQKKIRIAKPLNISGLTDNVTEPHYSTVVGLLHYGKEFYFDDTNQKREISFIEKWFQKISNWFKKEF</sequence>
<comment type="function">
    <text evidence="1">Cell division protein that is involved in the assembly of the Z ring. May serve as a membrane anchor for the Z ring.</text>
</comment>
<comment type="subunit">
    <text evidence="1">Self-interacts. Interacts with FtsZ.</text>
</comment>
<comment type="subcellular location">
    <subcellularLocation>
        <location evidence="1">Cell inner membrane</location>
        <topology evidence="1">Peripheral membrane protein</topology>
        <orientation evidence="1">Cytoplasmic side</orientation>
    </subcellularLocation>
    <text evidence="1">Localizes to the Z ring in an FtsZ-dependent manner. Targeted to the membrane through a conserved C-terminal amphipathic helix.</text>
</comment>
<comment type="similarity">
    <text evidence="1">Belongs to the FtsA/MreB family.</text>
</comment>
<organism>
    <name type="scientific">Buchnera aphidicola subsp. Schizaphis graminum (strain Sg)</name>
    <dbReference type="NCBI Taxonomy" id="198804"/>
    <lineage>
        <taxon>Bacteria</taxon>
        <taxon>Pseudomonadati</taxon>
        <taxon>Pseudomonadota</taxon>
        <taxon>Gammaproteobacteria</taxon>
        <taxon>Enterobacterales</taxon>
        <taxon>Erwiniaceae</taxon>
        <taxon>Buchnera</taxon>
    </lineage>
</organism>
<evidence type="ECO:0000255" key="1">
    <source>
        <dbReference type="HAMAP-Rule" id="MF_02033"/>
    </source>
</evidence>
<evidence type="ECO:0000305" key="2"/>
<reference key="1">
    <citation type="journal article" date="1998" name="Curr. Microbiol.">
        <title>Characterization of ftsZ, the cell division gene of Buchnera aphidicola (endosymbiont of aphids) and detection of the product.</title>
        <authorList>
            <person name="Baumann L."/>
            <person name="Baumann P."/>
        </authorList>
    </citation>
    <scope>NUCLEOTIDE SEQUENCE [GENOMIC DNA]</scope>
</reference>
<reference key="2">
    <citation type="journal article" date="2002" name="Science">
        <title>50 million years of genomic stasis in endosymbiotic bacteria.</title>
        <authorList>
            <person name="Tamas I."/>
            <person name="Klasson L."/>
            <person name="Canbaeck B."/>
            <person name="Naeslund A.K."/>
            <person name="Eriksson A.-S."/>
            <person name="Wernegreen J.J."/>
            <person name="Sandstroem J.P."/>
            <person name="Moran N.A."/>
            <person name="Andersson S.G.E."/>
        </authorList>
    </citation>
    <scope>NUCLEOTIDE SEQUENCE [LARGE SCALE GENOMIC DNA]</scope>
    <source>
        <strain>Sg</strain>
    </source>
</reference>
<accession>O51928</accession>
<keyword id="KW-0131">Cell cycle</keyword>
<keyword id="KW-0132">Cell division</keyword>
<keyword id="KW-0997">Cell inner membrane</keyword>
<keyword id="KW-1003">Cell membrane</keyword>
<keyword id="KW-0472">Membrane</keyword>
<feature type="chain" id="PRO_0000062732" description="Cell division protein FtsA">
    <location>
        <begin position="1"/>
        <end position="418"/>
    </location>
</feature>
<feature type="sequence conflict" description="In Ref. 1; AAC46068." evidence="2" ref="1">
    <original>N</original>
    <variation>D</variation>
    <location>
        <position position="53"/>
    </location>
</feature>
<feature type="sequence conflict" description="In Ref. 1; AAC46068." evidence="2" ref="1">
    <original>Q</original>
    <variation>P</variation>
    <location>
        <position position="91"/>
    </location>
</feature>
<feature type="sequence conflict" description="In Ref. 1; AAC46068." evidence="2" ref="1">
    <original>E</original>
    <variation>D</variation>
    <location>
        <position position="298"/>
    </location>
</feature>
<proteinExistence type="inferred from homology"/>
<gene>
    <name evidence="1" type="primary">ftsA</name>
    <name type="ordered locus">BUsg_207</name>
</gene>
<dbReference type="EMBL" id="AF012886">
    <property type="protein sequence ID" value="AAC46068.1"/>
    <property type="molecule type" value="Genomic_DNA"/>
</dbReference>
<dbReference type="EMBL" id="AE013218">
    <property type="protein sequence ID" value="AAM67771.1"/>
    <property type="molecule type" value="Genomic_DNA"/>
</dbReference>
<dbReference type="RefSeq" id="WP_011053738.1">
    <property type="nucleotide sequence ID" value="NC_004061.1"/>
</dbReference>
<dbReference type="SMR" id="O51928"/>
<dbReference type="STRING" id="198804.BUsg_207"/>
<dbReference type="GeneID" id="93003674"/>
<dbReference type="KEGG" id="bas:BUsg_207"/>
<dbReference type="eggNOG" id="COG0849">
    <property type="taxonomic scope" value="Bacteria"/>
</dbReference>
<dbReference type="HOGENOM" id="CLU_037850_3_2_6"/>
<dbReference type="Proteomes" id="UP000000416">
    <property type="component" value="Chromosome"/>
</dbReference>
<dbReference type="GO" id="GO:0032153">
    <property type="term" value="C:cell division site"/>
    <property type="evidence" value="ECO:0007669"/>
    <property type="project" value="UniProtKB-UniRule"/>
</dbReference>
<dbReference type="GO" id="GO:0009898">
    <property type="term" value="C:cytoplasmic side of plasma membrane"/>
    <property type="evidence" value="ECO:0007669"/>
    <property type="project" value="UniProtKB-UniRule"/>
</dbReference>
<dbReference type="GO" id="GO:0043093">
    <property type="term" value="P:FtsZ-dependent cytokinesis"/>
    <property type="evidence" value="ECO:0007669"/>
    <property type="project" value="UniProtKB-UniRule"/>
</dbReference>
<dbReference type="CDD" id="cd24048">
    <property type="entry name" value="ASKHA_NBD_FtsA"/>
    <property type="match status" value="1"/>
</dbReference>
<dbReference type="FunFam" id="3.30.1490.110:FF:000001">
    <property type="entry name" value="Cell division protein FtsA"/>
    <property type="match status" value="1"/>
</dbReference>
<dbReference type="Gene3D" id="3.30.1490.110">
    <property type="match status" value="1"/>
</dbReference>
<dbReference type="Gene3D" id="3.30.420.40">
    <property type="match status" value="1"/>
</dbReference>
<dbReference type="HAMAP" id="MF_02033">
    <property type="entry name" value="FtsA"/>
    <property type="match status" value="1"/>
</dbReference>
<dbReference type="InterPro" id="IPR043129">
    <property type="entry name" value="ATPase_NBD"/>
</dbReference>
<dbReference type="InterPro" id="IPR020823">
    <property type="entry name" value="Cell_div_FtsA"/>
</dbReference>
<dbReference type="InterPro" id="IPR050696">
    <property type="entry name" value="FtsA/MreB"/>
</dbReference>
<dbReference type="InterPro" id="IPR003494">
    <property type="entry name" value="SHS2_FtsA"/>
</dbReference>
<dbReference type="NCBIfam" id="TIGR01174">
    <property type="entry name" value="ftsA"/>
    <property type="match status" value="1"/>
</dbReference>
<dbReference type="NCBIfam" id="NF007009">
    <property type="entry name" value="PRK09472.1"/>
    <property type="match status" value="1"/>
</dbReference>
<dbReference type="PANTHER" id="PTHR32432:SF4">
    <property type="entry name" value="CELL DIVISION PROTEIN FTSA"/>
    <property type="match status" value="1"/>
</dbReference>
<dbReference type="PANTHER" id="PTHR32432">
    <property type="entry name" value="CELL DIVISION PROTEIN FTSA-RELATED"/>
    <property type="match status" value="1"/>
</dbReference>
<dbReference type="Pfam" id="PF14450">
    <property type="entry name" value="FtsA"/>
    <property type="match status" value="1"/>
</dbReference>
<dbReference type="Pfam" id="PF02491">
    <property type="entry name" value="SHS2_FTSA"/>
    <property type="match status" value="1"/>
</dbReference>
<dbReference type="PIRSF" id="PIRSF003101">
    <property type="entry name" value="FtsA"/>
    <property type="match status" value="1"/>
</dbReference>
<dbReference type="SMART" id="SM00842">
    <property type="entry name" value="FtsA"/>
    <property type="match status" value="1"/>
</dbReference>
<dbReference type="SUPFAM" id="SSF53067">
    <property type="entry name" value="Actin-like ATPase domain"/>
    <property type="match status" value="2"/>
</dbReference>
<protein>
    <recommendedName>
        <fullName evidence="1">Cell division protein FtsA</fullName>
    </recommendedName>
</protein>